<keyword id="KW-0044">Antibiotic</keyword>
<keyword id="KW-0929">Antimicrobial</keyword>
<keyword id="KW-0964">Secreted</keyword>
<keyword id="KW-0732">Signal</keyword>
<dbReference type="EMBL" id="AY740692">
    <property type="protein sequence ID" value="AAW72462.1"/>
    <property type="molecule type" value="mRNA"/>
</dbReference>
<dbReference type="GO" id="GO:0005576">
    <property type="term" value="C:extracellular region"/>
    <property type="evidence" value="ECO:0007669"/>
    <property type="project" value="UniProtKB-SubCell"/>
</dbReference>
<dbReference type="GO" id="GO:0042742">
    <property type="term" value="P:defense response to bacterium"/>
    <property type="evidence" value="ECO:0007669"/>
    <property type="project" value="UniProtKB-KW"/>
</dbReference>
<protein>
    <recommendedName>
        <fullName>Anionic peptide clone 10</fullName>
    </recommendedName>
</protein>
<reference key="1">
    <citation type="journal article" date="2005" name="Toxicon">
        <title>The Brazilian scorpion Tityus costatus Karsch: genes, peptides and function.</title>
        <authorList>
            <person name="Diego-Garcia E."/>
            <person name="Batista C.V.F."/>
            <person name="Garcia-Gomez B.I."/>
            <person name="Lucas S."/>
            <person name="Candido D.M."/>
            <person name="Gomez-Lagunas F."/>
            <person name="Possani L.D."/>
        </authorList>
    </citation>
    <scope>NUCLEOTIDE SEQUENCE [MRNA]</scope>
    <source>
        <tissue>Venom gland</tissue>
    </source>
</reference>
<name>NDB2V_TITCO</name>
<comment type="function">
    <text evidence="1">May be an antimicrobial peptide.</text>
</comment>
<comment type="subcellular location">
    <subcellularLocation>
        <location evidence="1">Secreted</location>
    </subcellularLocation>
</comment>
<comment type="tissue specificity">
    <text evidence="3">Expressed by the venom gland.</text>
</comment>
<comment type="similarity">
    <text evidence="3">Belongs to the non-disulfide-bridged peptide (NDBP) superfamily. Long chain multifunctional peptide (group 2) family.</text>
</comment>
<evidence type="ECO:0000250" key="1"/>
<evidence type="ECO:0000255" key="2"/>
<evidence type="ECO:0000305" key="3"/>
<accession>Q5G8A9</accession>
<proteinExistence type="inferred from homology"/>
<organism>
    <name type="scientific">Tityus costatus</name>
    <name type="common">Brazilian scorpion</name>
    <dbReference type="NCBI Taxonomy" id="309814"/>
    <lineage>
        <taxon>Eukaryota</taxon>
        <taxon>Metazoa</taxon>
        <taxon>Ecdysozoa</taxon>
        <taxon>Arthropoda</taxon>
        <taxon>Chelicerata</taxon>
        <taxon>Arachnida</taxon>
        <taxon>Scorpiones</taxon>
        <taxon>Buthida</taxon>
        <taxon>Buthoidea</taxon>
        <taxon>Buthidae</taxon>
        <taxon>Tityus</taxon>
    </lineage>
</organism>
<feature type="signal peptide" evidence="2">
    <location>
        <begin position="1"/>
        <end position="24"/>
    </location>
</feature>
<feature type="chain" id="PRO_0000231518" description="Anionic peptide clone 10">
    <location>
        <begin position="25"/>
        <end position="74"/>
    </location>
</feature>
<sequence length="74" mass="8339">MVSKSLIVLLLVSVLVSTFFTTEAYPASYDGDFDALDDLDDLDLDDLLDLEPADLVLLDMWANMLDSQDFEDFE</sequence>